<sequence>MKYIGAHVSASGGVENAVLRSVEIGANAFALFTKNQRQWQAPPLKEDTIEKFKRFCQVHHFSPAQILPHDSYLINLGNPEAENLAKSREAFIDEMRRCDQLGLTLLNFHPGSHLNKISEQDCLARIAESINIAVDSVPNVVAVIENTAGQGSNLGWRFEHLAEIIEQVENKQRVGVCLDTCHLFSAGYDISSLASCEQTFADFDKVVGFEFLRGMHLNGSKTLLASRVDRHHTLREGTIGTDVFKFIMNNAHFDNIPLILETIEPEIWAEEINFLRSLEQN</sequence>
<dbReference type="EC" id="3.1.21.2" evidence="1"/>
<dbReference type="EMBL" id="CP001321">
    <property type="protein sequence ID" value="ACL33233.1"/>
    <property type="molecule type" value="Genomic_DNA"/>
</dbReference>
<dbReference type="RefSeq" id="WP_015939885.1">
    <property type="nucleotide sequence ID" value="NC_011852.1"/>
</dbReference>
<dbReference type="SMR" id="B8F7D1"/>
<dbReference type="STRING" id="557723.HAPS_1703"/>
<dbReference type="GeneID" id="66619788"/>
<dbReference type="KEGG" id="hap:HAPS_1703"/>
<dbReference type="PATRIC" id="fig|557723.8.peg.1682"/>
<dbReference type="HOGENOM" id="CLU_025885_0_4_6"/>
<dbReference type="Proteomes" id="UP000006743">
    <property type="component" value="Chromosome"/>
</dbReference>
<dbReference type="GO" id="GO:0008833">
    <property type="term" value="F:deoxyribonuclease IV (phage-T4-induced) activity"/>
    <property type="evidence" value="ECO:0007669"/>
    <property type="project" value="UniProtKB-UniRule"/>
</dbReference>
<dbReference type="GO" id="GO:0003677">
    <property type="term" value="F:DNA binding"/>
    <property type="evidence" value="ECO:0007669"/>
    <property type="project" value="InterPro"/>
</dbReference>
<dbReference type="GO" id="GO:0003906">
    <property type="term" value="F:DNA-(apurinic or apyrimidinic site) endonuclease activity"/>
    <property type="evidence" value="ECO:0007669"/>
    <property type="project" value="TreeGrafter"/>
</dbReference>
<dbReference type="GO" id="GO:0008081">
    <property type="term" value="F:phosphoric diester hydrolase activity"/>
    <property type="evidence" value="ECO:0007669"/>
    <property type="project" value="TreeGrafter"/>
</dbReference>
<dbReference type="GO" id="GO:0008270">
    <property type="term" value="F:zinc ion binding"/>
    <property type="evidence" value="ECO:0007669"/>
    <property type="project" value="UniProtKB-UniRule"/>
</dbReference>
<dbReference type="GO" id="GO:0006284">
    <property type="term" value="P:base-excision repair"/>
    <property type="evidence" value="ECO:0007669"/>
    <property type="project" value="TreeGrafter"/>
</dbReference>
<dbReference type="CDD" id="cd00019">
    <property type="entry name" value="AP2Ec"/>
    <property type="match status" value="1"/>
</dbReference>
<dbReference type="FunFam" id="3.20.20.150:FF:000001">
    <property type="entry name" value="Probable endonuclease 4"/>
    <property type="match status" value="1"/>
</dbReference>
<dbReference type="Gene3D" id="3.20.20.150">
    <property type="entry name" value="Divalent-metal-dependent TIM barrel enzymes"/>
    <property type="match status" value="1"/>
</dbReference>
<dbReference type="HAMAP" id="MF_00152">
    <property type="entry name" value="Nfo"/>
    <property type="match status" value="1"/>
</dbReference>
<dbReference type="InterPro" id="IPR001719">
    <property type="entry name" value="AP_endonuc_2"/>
</dbReference>
<dbReference type="InterPro" id="IPR018246">
    <property type="entry name" value="AP_endonuc_F2_Zn_BS"/>
</dbReference>
<dbReference type="InterPro" id="IPR036237">
    <property type="entry name" value="Xyl_isomerase-like_sf"/>
</dbReference>
<dbReference type="InterPro" id="IPR013022">
    <property type="entry name" value="Xyl_isomerase-like_TIM-brl"/>
</dbReference>
<dbReference type="NCBIfam" id="TIGR00587">
    <property type="entry name" value="nfo"/>
    <property type="match status" value="1"/>
</dbReference>
<dbReference type="NCBIfam" id="NF002199">
    <property type="entry name" value="PRK01060.1-4"/>
    <property type="match status" value="1"/>
</dbReference>
<dbReference type="PANTHER" id="PTHR21445:SF0">
    <property type="entry name" value="APURINIC-APYRIMIDINIC ENDONUCLEASE"/>
    <property type="match status" value="1"/>
</dbReference>
<dbReference type="PANTHER" id="PTHR21445">
    <property type="entry name" value="ENDONUCLEASE IV ENDODEOXYRIBONUCLEASE IV"/>
    <property type="match status" value="1"/>
</dbReference>
<dbReference type="Pfam" id="PF01261">
    <property type="entry name" value="AP_endonuc_2"/>
    <property type="match status" value="1"/>
</dbReference>
<dbReference type="SMART" id="SM00518">
    <property type="entry name" value="AP2Ec"/>
    <property type="match status" value="1"/>
</dbReference>
<dbReference type="SUPFAM" id="SSF51658">
    <property type="entry name" value="Xylose isomerase-like"/>
    <property type="match status" value="1"/>
</dbReference>
<dbReference type="PROSITE" id="PS00729">
    <property type="entry name" value="AP_NUCLEASE_F2_1"/>
    <property type="match status" value="1"/>
</dbReference>
<dbReference type="PROSITE" id="PS00730">
    <property type="entry name" value="AP_NUCLEASE_F2_2"/>
    <property type="match status" value="1"/>
</dbReference>
<dbReference type="PROSITE" id="PS00731">
    <property type="entry name" value="AP_NUCLEASE_F2_3"/>
    <property type="match status" value="1"/>
</dbReference>
<dbReference type="PROSITE" id="PS51432">
    <property type="entry name" value="AP_NUCLEASE_F2_4"/>
    <property type="match status" value="1"/>
</dbReference>
<accession>B8F7D1</accession>
<organism>
    <name type="scientific">Glaesserella parasuis serovar 5 (strain SH0165)</name>
    <name type="common">Haemophilus parasuis</name>
    <dbReference type="NCBI Taxonomy" id="557723"/>
    <lineage>
        <taxon>Bacteria</taxon>
        <taxon>Pseudomonadati</taxon>
        <taxon>Pseudomonadota</taxon>
        <taxon>Gammaproteobacteria</taxon>
        <taxon>Pasteurellales</taxon>
        <taxon>Pasteurellaceae</taxon>
        <taxon>Glaesserella</taxon>
    </lineage>
</organism>
<comment type="function">
    <text evidence="1">Endonuclease IV plays a role in DNA repair. It cleaves phosphodiester bonds at apurinic or apyrimidinic (AP) sites, generating a 3'-hydroxyl group and a 5'-terminal sugar phosphate.</text>
</comment>
<comment type="catalytic activity">
    <reaction evidence="1">
        <text>Endonucleolytic cleavage to 5'-phosphooligonucleotide end-products.</text>
        <dbReference type="EC" id="3.1.21.2"/>
    </reaction>
</comment>
<comment type="cofactor">
    <cofactor evidence="1">
        <name>Zn(2+)</name>
        <dbReference type="ChEBI" id="CHEBI:29105"/>
    </cofactor>
    <text evidence="1">Binds 3 Zn(2+) ions.</text>
</comment>
<comment type="similarity">
    <text evidence="1">Belongs to the AP endonuclease 2 family.</text>
</comment>
<feature type="chain" id="PRO_1000123329" description="Probable endonuclease 4">
    <location>
        <begin position="1"/>
        <end position="281"/>
    </location>
</feature>
<feature type="binding site" evidence="1">
    <location>
        <position position="69"/>
    </location>
    <ligand>
        <name>Zn(2+)</name>
        <dbReference type="ChEBI" id="CHEBI:29105"/>
        <label>1</label>
    </ligand>
</feature>
<feature type="binding site" evidence="1">
    <location>
        <position position="109"/>
    </location>
    <ligand>
        <name>Zn(2+)</name>
        <dbReference type="ChEBI" id="CHEBI:29105"/>
        <label>1</label>
    </ligand>
</feature>
<feature type="binding site" evidence="1">
    <location>
        <position position="145"/>
    </location>
    <ligand>
        <name>Zn(2+)</name>
        <dbReference type="ChEBI" id="CHEBI:29105"/>
        <label>1</label>
    </ligand>
</feature>
<feature type="binding site" evidence="1">
    <location>
        <position position="145"/>
    </location>
    <ligand>
        <name>Zn(2+)</name>
        <dbReference type="ChEBI" id="CHEBI:29105"/>
        <label>2</label>
    </ligand>
</feature>
<feature type="binding site" evidence="1">
    <location>
        <position position="179"/>
    </location>
    <ligand>
        <name>Zn(2+)</name>
        <dbReference type="ChEBI" id="CHEBI:29105"/>
        <label>2</label>
    </ligand>
</feature>
<feature type="binding site" evidence="1">
    <location>
        <position position="182"/>
    </location>
    <ligand>
        <name>Zn(2+)</name>
        <dbReference type="ChEBI" id="CHEBI:29105"/>
        <label>3</label>
    </ligand>
</feature>
<feature type="binding site" evidence="1">
    <location>
        <position position="216"/>
    </location>
    <ligand>
        <name>Zn(2+)</name>
        <dbReference type="ChEBI" id="CHEBI:29105"/>
        <label>2</label>
    </ligand>
</feature>
<feature type="binding site" evidence="1">
    <location>
        <position position="229"/>
    </location>
    <ligand>
        <name>Zn(2+)</name>
        <dbReference type="ChEBI" id="CHEBI:29105"/>
        <label>3</label>
    </ligand>
</feature>
<feature type="binding site" evidence="1">
    <location>
        <position position="231"/>
    </location>
    <ligand>
        <name>Zn(2+)</name>
        <dbReference type="ChEBI" id="CHEBI:29105"/>
        <label>3</label>
    </ligand>
</feature>
<feature type="binding site" evidence="1">
    <location>
        <position position="261"/>
    </location>
    <ligand>
        <name>Zn(2+)</name>
        <dbReference type="ChEBI" id="CHEBI:29105"/>
        <label>2</label>
    </ligand>
</feature>
<evidence type="ECO:0000255" key="1">
    <source>
        <dbReference type="HAMAP-Rule" id="MF_00152"/>
    </source>
</evidence>
<protein>
    <recommendedName>
        <fullName evidence="1">Probable endonuclease 4</fullName>
        <ecNumber evidence="1">3.1.21.2</ecNumber>
    </recommendedName>
    <alternativeName>
        <fullName evidence="1">Endodeoxyribonuclease IV</fullName>
    </alternativeName>
    <alternativeName>
        <fullName evidence="1">Endonuclease IV</fullName>
    </alternativeName>
</protein>
<keyword id="KW-0227">DNA damage</keyword>
<keyword id="KW-0234">DNA repair</keyword>
<keyword id="KW-0255">Endonuclease</keyword>
<keyword id="KW-0378">Hydrolase</keyword>
<keyword id="KW-0479">Metal-binding</keyword>
<keyword id="KW-0540">Nuclease</keyword>
<keyword id="KW-1185">Reference proteome</keyword>
<keyword id="KW-0862">Zinc</keyword>
<reference key="1">
    <citation type="journal article" date="2009" name="J. Bacteriol.">
        <title>Complete genome sequence of Haemophilus parasuis SH0165.</title>
        <authorList>
            <person name="Yue M."/>
            <person name="Yang F."/>
            <person name="Yang J."/>
            <person name="Bei W."/>
            <person name="Cai X."/>
            <person name="Chen L."/>
            <person name="Dong J."/>
            <person name="Zhou R."/>
            <person name="Jin M."/>
            <person name="Jin Q."/>
            <person name="Chen H."/>
        </authorList>
    </citation>
    <scope>NUCLEOTIDE SEQUENCE [LARGE SCALE GENOMIC DNA]</scope>
    <source>
        <strain>SH0165</strain>
    </source>
</reference>
<gene>
    <name evidence="1" type="primary">nfo</name>
    <name type="ordered locus">HAPS_1703</name>
</gene>
<proteinExistence type="inferred from homology"/>
<name>END4_GLAP5</name>